<evidence type="ECO:0000250" key="1"/>
<evidence type="ECO:0000255" key="2"/>
<evidence type="ECO:0000255" key="3">
    <source>
        <dbReference type="PROSITE-ProRule" id="PRU00172"/>
    </source>
</evidence>
<evidence type="ECO:0000255" key="4">
    <source>
        <dbReference type="PROSITE-ProRule" id="PRU01077"/>
    </source>
</evidence>
<evidence type="ECO:0000256" key="5">
    <source>
        <dbReference type="SAM" id="MobiDB-lite"/>
    </source>
</evidence>
<gene>
    <name type="primary">mgp4</name>
    <name type="synonym">gacDD</name>
    <name type="ORF">DDB_G0283899</name>
</gene>
<proteinExistence type="inferred from homology"/>
<name>MGP4_DICDI</name>
<sequence length="909" mass="101591">MASLIGSAKLPFNNEVELISDEIEKGLNDSTTIRKFFEKRAQIEEEYAKNLQKLCKATPILLKSGGTSDAFSMIVESTNQFSNHTISTIQRFNQDVNDPLAGFIKDLRGELKQYSLEGQNLAKERKQAFDSLKSSKALYEQMCNNPESDVMKVQQSEEEYKLQVQACNQYHSLYHQEKLPKIQNEIIRLETVRMQKMKTNLKKYITEFESIPQKQQQSIKDSEELINSIDTKQDIQSFTNFNKTLNTPTPDFQFESCESINGGGGGAAGRKSKKGGWRQTISVLKIGNAFMKDDGTIVNGNSSLNSSSSNINILNNPIVFKIPIEEIMFKQKSKFPNLDIPYILVLLVNLIKKLDNGMGMKTEGIFRIPGHTSEVNALKKLINEQGEYQFPPDLYSIHPIASLLKLWLREMPQPLIPNYVYDKSLECQSIEEFIVFFKFLPASNQKIITYLAGFLNELVQPDNVVTSKMNLDNVAMVFAPSFLRCDSQDMILANVDREKTLVKLIIEGYLKLSDVCPIQLDDIDSKIQIPSFSNNNNNSTTTTTTTTTTTVPSSTSTNITTNGASALGAESSTTPLPSLTTFSQSQSSSPPNQPSPSITPQQVSNLPPSYQPPQPPPTMAPPPLFNIPQQQQQQQVTNNNNSGGYTPPPLQYTQSSSNLPPIQLGVTNSPSKPQLSDKQKEKEKEKEKEKEKEKEREKEKEKEKEKEKEKEKEKEKKGHKKSSSSTSPNSSSLSISNFLSSNKDKDKEKDKEKEKEKEKEKDKEILATNSTPEKPVSNRMSLIFSQQLQQQLQQQIQQHQQLQQQSNGSPTSPISPSSANNSPSMSPSMVKRTIRPNLPPLQSGTSATTSSSSLTSSSSPTLTSSKDNIQKQQLPELNQQQQQQSPQAELKSSGIKSLLQRVPPPPSQS</sequence>
<accession>Q54QF4</accession>
<feature type="chain" id="PRO_0000380227" description="GTPase activating protein homolog 4">
    <location>
        <begin position="1"/>
        <end position="909"/>
    </location>
</feature>
<feature type="domain" description="F-BAR" evidence="4">
    <location>
        <begin position="1"/>
        <end position="257"/>
    </location>
</feature>
<feature type="domain" description="Rho-GAP" evidence="3">
    <location>
        <begin position="322"/>
        <end position="513"/>
    </location>
</feature>
<feature type="region of interest" description="Disordered" evidence="5">
    <location>
        <begin position="529"/>
        <end position="909"/>
    </location>
</feature>
<feature type="coiled-coil region" evidence="2">
    <location>
        <begin position="672"/>
        <end position="809"/>
    </location>
</feature>
<feature type="compositionally biased region" description="Low complexity" evidence="5">
    <location>
        <begin position="533"/>
        <end position="562"/>
    </location>
</feature>
<feature type="compositionally biased region" description="Low complexity" evidence="5">
    <location>
        <begin position="571"/>
        <end position="602"/>
    </location>
</feature>
<feature type="compositionally biased region" description="Pro residues" evidence="5">
    <location>
        <begin position="609"/>
        <end position="625"/>
    </location>
</feature>
<feature type="compositionally biased region" description="Polar residues" evidence="5">
    <location>
        <begin position="651"/>
        <end position="674"/>
    </location>
</feature>
<feature type="compositionally biased region" description="Basic and acidic residues" evidence="5">
    <location>
        <begin position="675"/>
        <end position="716"/>
    </location>
</feature>
<feature type="compositionally biased region" description="Low complexity" evidence="5">
    <location>
        <begin position="723"/>
        <end position="741"/>
    </location>
</feature>
<feature type="compositionally biased region" description="Basic and acidic residues" evidence="5">
    <location>
        <begin position="742"/>
        <end position="765"/>
    </location>
</feature>
<feature type="compositionally biased region" description="Polar residues" evidence="5">
    <location>
        <begin position="767"/>
        <end position="785"/>
    </location>
</feature>
<feature type="compositionally biased region" description="Low complexity" evidence="5">
    <location>
        <begin position="786"/>
        <end position="828"/>
    </location>
</feature>
<feature type="compositionally biased region" description="Low complexity" evidence="5">
    <location>
        <begin position="843"/>
        <end position="892"/>
    </location>
</feature>
<feature type="site" description="Arginine finger; crucial for GTP hydrolysis by stabilizing the transition state" evidence="3">
    <location>
        <position position="367"/>
    </location>
</feature>
<comment type="function">
    <text evidence="1">Rho GTPase-activating protein involved in the signal transduction pathway.</text>
</comment>
<comment type="subcellular location">
    <subcellularLocation>
        <location>Cytoplasm</location>
    </subcellularLocation>
    <subcellularLocation>
        <location evidence="1">Contractile vacuole</location>
    </subcellularLocation>
</comment>
<reference key="1">
    <citation type="journal article" date="2005" name="Nature">
        <title>The genome of the social amoeba Dictyostelium discoideum.</title>
        <authorList>
            <person name="Eichinger L."/>
            <person name="Pachebat J.A."/>
            <person name="Gloeckner G."/>
            <person name="Rajandream M.A."/>
            <person name="Sucgang R."/>
            <person name="Berriman M."/>
            <person name="Song J."/>
            <person name="Olsen R."/>
            <person name="Szafranski K."/>
            <person name="Xu Q."/>
            <person name="Tunggal B."/>
            <person name="Kummerfeld S."/>
            <person name="Madera M."/>
            <person name="Konfortov B.A."/>
            <person name="Rivero F."/>
            <person name="Bankier A.T."/>
            <person name="Lehmann R."/>
            <person name="Hamlin N."/>
            <person name="Davies R."/>
            <person name="Gaudet P."/>
            <person name="Fey P."/>
            <person name="Pilcher K."/>
            <person name="Chen G."/>
            <person name="Saunders D."/>
            <person name="Sodergren E.J."/>
            <person name="Davis P."/>
            <person name="Kerhornou A."/>
            <person name="Nie X."/>
            <person name="Hall N."/>
            <person name="Anjard C."/>
            <person name="Hemphill L."/>
            <person name="Bason N."/>
            <person name="Farbrother P."/>
            <person name="Desany B."/>
            <person name="Just E."/>
            <person name="Morio T."/>
            <person name="Rost R."/>
            <person name="Churcher C.M."/>
            <person name="Cooper J."/>
            <person name="Haydock S."/>
            <person name="van Driessche N."/>
            <person name="Cronin A."/>
            <person name="Goodhead I."/>
            <person name="Muzny D.M."/>
            <person name="Mourier T."/>
            <person name="Pain A."/>
            <person name="Lu M."/>
            <person name="Harper D."/>
            <person name="Lindsay R."/>
            <person name="Hauser H."/>
            <person name="James K.D."/>
            <person name="Quiles M."/>
            <person name="Madan Babu M."/>
            <person name="Saito T."/>
            <person name="Buchrieser C."/>
            <person name="Wardroper A."/>
            <person name="Felder M."/>
            <person name="Thangavelu M."/>
            <person name="Johnson D."/>
            <person name="Knights A."/>
            <person name="Loulseged H."/>
            <person name="Mungall K.L."/>
            <person name="Oliver K."/>
            <person name="Price C."/>
            <person name="Quail M.A."/>
            <person name="Urushihara H."/>
            <person name="Hernandez J."/>
            <person name="Rabbinowitsch E."/>
            <person name="Steffen D."/>
            <person name="Sanders M."/>
            <person name="Ma J."/>
            <person name="Kohara Y."/>
            <person name="Sharp S."/>
            <person name="Simmonds M.N."/>
            <person name="Spiegler S."/>
            <person name="Tivey A."/>
            <person name="Sugano S."/>
            <person name="White B."/>
            <person name="Walker D."/>
            <person name="Woodward J.R."/>
            <person name="Winckler T."/>
            <person name="Tanaka Y."/>
            <person name="Shaulsky G."/>
            <person name="Schleicher M."/>
            <person name="Weinstock G.M."/>
            <person name="Rosenthal A."/>
            <person name="Cox E.C."/>
            <person name="Chisholm R.L."/>
            <person name="Gibbs R.A."/>
            <person name="Loomis W.F."/>
            <person name="Platzer M."/>
            <person name="Kay R.R."/>
            <person name="Williams J.G."/>
            <person name="Dear P.H."/>
            <person name="Noegel A.A."/>
            <person name="Barrell B.G."/>
            <person name="Kuspa A."/>
        </authorList>
    </citation>
    <scope>NUCLEOTIDE SEQUENCE [LARGE SCALE GENOMIC DNA]</scope>
    <source>
        <strain>AX4</strain>
    </source>
</reference>
<reference key="2">
    <citation type="journal article" date="2008" name="J. Cell Sci.">
        <title>Dictyostelium MEGAPs: F-BAR domain proteins that regulate motility and membrane tubulation in contractile vacuoles.</title>
        <authorList>
            <person name="Heath R.J."/>
            <person name="Insall R.H."/>
        </authorList>
    </citation>
    <scope>IDENTIFICATION</scope>
</reference>
<organism>
    <name type="scientific">Dictyostelium discoideum</name>
    <name type="common">Social amoeba</name>
    <dbReference type="NCBI Taxonomy" id="44689"/>
    <lineage>
        <taxon>Eukaryota</taxon>
        <taxon>Amoebozoa</taxon>
        <taxon>Evosea</taxon>
        <taxon>Eumycetozoa</taxon>
        <taxon>Dictyostelia</taxon>
        <taxon>Dictyosteliales</taxon>
        <taxon>Dictyosteliaceae</taxon>
        <taxon>Dictyostelium</taxon>
    </lineage>
</organism>
<keyword id="KW-0175">Coiled coil</keyword>
<keyword id="KW-0963">Cytoplasm</keyword>
<keyword id="KW-0343">GTPase activation</keyword>
<keyword id="KW-1185">Reference proteome</keyword>
<keyword id="KW-0926">Vacuole</keyword>
<protein>
    <recommendedName>
        <fullName>GTPase activating protein homolog 4</fullName>
    </recommendedName>
    <alternativeName>
        <fullName>GTPase activating factor for raC protein DD</fullName>
    </alternativeName>
    <alternativeName>
        <fullName>Rho GTPase-activating protein gacDD</fullName>
    </alternativeName>
</protein>
<dbReference type="EMBL" id="AAFI02000057">
    <property type="protein sequence ID" value="EAL65564.1"/>
    <property type="molecule type" value="Genomic_DNA"/>
</dbReference>
<dbReference type="RefSeq" id="XP_638917.1">
    <property type="nucleotide sequence ID" value="XM_633825.1"/>
</dbReference>
<dbReference type="SMR" id="Q54QF4"/>
<dbReference type="FunCoup" id="Q54QF4">
    <property type="interactions" value="77"/>
</dbReference>
<dbReference type="GlyGen" id="Q54QF4">
    <property type="glycosylation" value="1 site"/>
</dbReference>
<dbReference type="PaxDb" id="44689-DDB0233871"/>
<dbReference type="EnsemblProtists" id="EAL65564">
    <property type="protein sequence ID" value="EAL65564"/>
    <property type="gene ID" value="DDB_G0283899"/>
</dbReference>
<dbReference type="GeneID" id="8624314"/>
<dbReference type="KEGG" id="ddi:DDB_G0283899"/>
<dbReference type="dictyBase" id="DDB_G0283899">
    <property type="gene designation" value="mgp4"/>
</dbReference>
<dbReference type="VEuPathDB" id="AmoebaDB:DDB_G0283899"/>
<dbReference type="eggNOG" id="ENOG502RSTN">
    <property type="taxonomic scope" value="Eukaryota"/>
</dbReference>
<dbReference type="HOGENOM" id="CLU_319697_0_0_1"/>
<dbReference type="InParanoid" id="Q54QF4"/>
<dbReference type="OMA" id="MFKQKSK"/>
<dbReference type="PhylomeDB" id="Q54QF4"/>
<dbReference type="PRO" id="PR:Q54QF4"/>
<dbReference type="Proteomes" id="UP000002195">
    <property type="component" value="Chromosome 4"/>
</dbReference>
<dbReference type="GO" id="GO:0000331">
    <property type="term" value="C:contractile vacuole"/>
    <property type="evidence" value="ECO:0007669"/>
    <property type="project" value="UniProtKB-SubCell"/>
</dbReference>
<dbReference type="GO" id="GO:0005737">
    <property type="term" value="C:cytoplasm"/>
    <property type="evidence" value="ECO:0000318"/>
    <property type="project" value="GO_Central"/>
</dbReference>
<dbReference type="GO" id="GO:0005096">
    <property type="term" value="F:GTPase activator activity"/>
    <property type="evidence" value="ECO:0000318"/>
    <property type="project" value="GO_Central"/>
</dbReference>
<dbReference type="GO" id="GO:0007165">
    <property type="term" value="P:signal transduction"/>
    <property type="evidence" value="ECO:0007669"/>
    <property type="project" value="InterPro"/>
</dbReference>
<dbReference type="CDD" id="cd07610">
    <property type="entry name" value="FCH_F-BAR"/>
    <property type="match status" value="1"/>
</dbReference>
<dbReference type="FunFam" id="1.10.555.10:FF:000105">
    <property type="entry name" value="Mental retardation GTPase activating protein homolog 2"/>
    <property type="match status" value="1"/>
</dbReference>
<dbReference type="FunFam" id="1.20.1270.60:FF:000237">
    <property type="entry name" value="Mental retardation GTPase activating protein homolog 4"/>
    <property type="match status" value="1"/>
</dbReference>
<dbReference type="Gene3D" id="1.20.1270.60">
    <property type="entry name" value="Arfaptin homology (AH) domain/BAR domain"/>
    <property type="match status" value="1"/>
</dbReference>
<dbReference type="Gene3D" id="1.10.555.10">
    <property type="entry name" value="Rho GTPase activation protein"/>
    <property type="match status" value="1"/>
</dbReference>
<dbReference type="InterPro" id="IPR027267">
    <property type="entry name" value="AH/BAR_dom_sf"/>
</dbReference>
<dbReference type="InterPro" id="IPR031160">
    <property type="entry name" value="F_BAR"/>
</dbReference>
<dbReference type="InterPro" id="IPR001060">
    <property type="entry name" value="FCH_dom"/>
</dbReference>
<dbReference type="InterPro" id="IPR008936">
    <property type="entry name" value="Rho_GTPase_activation_prot"/>
</dbReference>
<dbReference type="InterPro" id="IPR000198">
    <property type="entry name" value="RhoGAP_dom"/>
</dbReference>
<dbReference type="PANTHER" id="PTHR45876">
    <property type="entry name" value="FI04035P"/>
    <property type="match status" value="1"/>
</dbReference>
<dbReference type="PANTHER" id="PTHR45876:SF12">
    <property type="entry name" value="GTPASE ACTIVATING PROTEIN HOMOLOG 4"/>
    <property type="match status" value="1"/>
</dbReference>
<dbReference type="Pfam" id="PF00611">
    <property type="entry name" value="FCH"/>
    <property type="match status" value="1"/>
</dbReference>
<dbReference type="Pfam" id="PF00620">
    <property type="entry name" value="RhoGAP"/>
    <property type="match status" value="1"/>
</dbReference>
<dbReference type="SMART" id="SM00324">
    <property type="entry name" value="RhoGAP"/>
    <property type="match status" value="1"/>
</dbReference>
<dbReference type="SUPFAM" id="SSF103657">
    <property type="entry name" value="BAR/IMD domain-like"/>
    <property type="match status" value="1"/>
</dbReference>
<dbReference type="SUPFAM" id="SSF48350">
    <property type="entry name" value="GTPase activation domain, GAP"/>
    <property type="match status" value="1"/>
</dbReference>
<dbReference type="PROSITE" id="PS51741">
    <property type="entry name" value="F_BAR"/>
    <property type="match status" value="1"/>
</dbReference>
<dbReference type="PROSITE" id="PS50238">
    <property type="entry name" value="RHOGAP"/>
    <property type="match status" value="1"/>
</dbReference>